<organism>
    <name type="scientific">Escherichia coli (strain UTI89 / UPEC)</name>
    <dbReference type="NCBI Taxonomy" id="364106"/>
    <lineage>
        <taxon>Bacteria</taxon>
        <taxon>Pseudomonadati</taxon>
        <taxon>Pseudomonadota</taxon>
        <taxon>Gammaproteobacteria</taxon>
        <taxon>Enterobacterales</taxon>
        <taxon>Enterobacteriaceae</taxon>
        <taxon>Escherichia</taxon>
    </lineage>
</organism>
<protein>
    <recommendedName>
        <fullName evidence="1">Cytochrome c-type biogenesis protein CcmE</fullName>
    </recommendedName>
    <alternativeName>
        <fullName evidence="1">Cytochrome c maturation protein E</fullName>
    </alternativeName>
    <alternativeName>
        <fullName evidence="1">Heme chaperone CcmE</fullName>
    </alternativeName>
</protein>
<sequence length="159" mass="17698">MNIRRKNRLWIACAVLAGLALTIGLVLYALRSNIDLFYTPGEILYGKRETQQMPEVGQRLRVGGMVMPGSVQRDPNSLKVTFTIYDAEGSVDVSYEGILPDLFREGQGVVVQGELEKGNHILAKEVLAKHDENYTPPEVEKAMEANHRRPASVYKDPAS</sequence>
<reference key="1">
    <citation type="journal article" date="2006" name="Proc. Natl. Acad. Sci. U.S.A.">
        <title>Identification of genes subject to positive selection in uropathogenic strains of Escherichia coli: a comparative genomics approach.</title>
        <authorList>
            <person name="Chen S.L."/>
            <person name="Hung C.-S."/>
            <person name="Xu J."/>
            <person name="Reigstad C.S."/>
            <person name="Magrini V."/>
            <person name="Sabo A."/>
            <person name="Blasiar D."/>
            <person name="Bieri T."/>
            <person name="Meyer R.R."/>
            <person name="Ozersky P."/>
            <person name="Armstrong J.R."/>
            <person name="Fulton R.S."/>
            <person name="Latreille J.P."/>
            <person name="Spieth J."/>
            <person name="Hooton T.M."/>
            <person name="Mardis E.R."/>
            <person name="Hultgren S.J."/>
            <person name="Gordon J.I."/>
        </authorList>
    </citation>
    <scope>NUCLEOTIDE SEQUENCE [LARGE SCALE GENOMIC DNA]</scope>
    <source>
        <strain>UTI89 / UPEC</strain>
    </source>
</reference>
<keyword id="KW-0997">Cell inner membrane</keyword>
<keyword id="KW-1003">Cell membrane</keyword>
<keyword id="KW-0201">Cytochrome c-type biogenesis</keyword>
<keyword id="KW-0349">Heme</keyword>
<keyword id="KW-0408">Iron</keyword>
<keyword id="KW-0472">Membrane</keyword>
<keyword id="KW-0479">Metal-binding</keyword>
<keyword id="KW-0735">Signal-anchor</keyword>
<keyword id="KW-0812">Transmembrane</keyword>
<keyword id="KW-1133">Transmembrane helix</keyword>
<name>CCME_ECOUT</name>
<proteinExistence type="inferred from homology"/>
<feature type="chain" id="PRO_1000070813" description="Cytochrome c-type biogenesis protein CcmE">
    <location>
        <begin position="1"/>
        <end position="159"/>
    </location>
</feature>
<feature type="topological domain" description="Cytoplasmic" evidence="1">
    <location>
        <begin position="1"/>
        <end position="8"/>
    </location>
</feature>
<feature type="transmembrane region" description="Helical; Signal-anchor for type II membrane protein" evidence="1">
    <location>
        <begin position="9"/>
        <end position="29"/>
    </location>
</feature>
<feature type="topological domain" description="Periplasmic" evidence="1">
    <location>
        <begin position="30"/>
        <end position="159"/>
    </location>
</feature>
<feature type="region of interest" description="Disordered" evidence="2">
    <location>
        <begin position="132"/>
        <end position="159"/>
    </location>
</feature>
<feature type="compositionally biased region" description="Basic and acidic residues" evidence="2">
    <location>
        <begin position="132"/>
        <end position="147"/>
    </location>
</feature>
<feature type="binding site" description="covalent" evidence="1">
    <location>
        <position position="130"/>
    </location>
    <ligand>
        <name>heme</name>
        <dbReference type="ChEBI" id="CHEBI:30413"/>
    </ligand>
</feature>
<feature type="binding site" description="axial binding residue" evidence="1">
    <location>
        <position position="134"/>
    </location>
    <ligand>
        <name>heme</name>
        <dbReference type="ChEBI" id="CHEBI:30413"/>
    </ligand>
    <ligandPart>
        <name>Fe</name>
        <dbReference type="ChEBI" id="CHEBI:18248"/>
    </ligandPart>
</feature>
<gene>
    <name evidence="1" type="primary">ccmE</name>
    <name evidence="1" type="synonym">cycJ</name>
    <name type="ordered locus">UTI89_C2475</name>
</gene>
<comment type="function">
    <text evidence="1">Heme chaperone required for the biogenesis of c-type cytochromes. Transiently binds heme delivered by CcmC and transfers the heme to apo-cytochromes in a process facilitated by CcmF and CcmH.</text>
</comment>
<comment type="subcellular location">
    <subcellularLocation>
        <location evidence="1">Cell inner membrane</location>
        <topology evidence="1">Single-pass type II membrane protein</topology>
        <orientation evidence="1">Periplasmic side</orientation>
    </subcellularLocation>
</comment>
<comment type="similarity">
    <text evidence="1">Belongs to the CcmE/CycJ family.</text>
</comment>
<accession>Q1R9M2</accession>
<evidence type="ECO:0000255" key="1">
    <source>
        <dbReference type="HAMAP-Rule" id="MF_01959"/>
    </source>
</evidence>
<evidence type="ECO:0000256" key="2">
    <source>
        <dbReference type="SAM" id="MobiDB-lite"/>
    </source>
</evidence>
<dbReference type="EMBL" id="CP000243">
    <property type="protein sequence ID" value="ABE07942.1"/>
    <property type="molecule type" value="Genomic_DNA"/>
</dbReference>
<dbReference type="RefSeq" id="WP_001026418.1">
    <property type="nucleotide sequence ID" value="NZ_CP064825.1"/>
</dbReference>
<dbReference type="SMR" id="Q1R9M2"/>
<dbReference type="GeneID" id="86860369"/>
<dbReference type="KEGG" id="eci:UTI89_C2475"/>
<dbReference type="HOGENOM" id="CLU_079503_1_0_6"/>
<dbReference type="Proteomes" id="UP000001952">
    <property type="component" value="Chromosome"/>
</dbReference>
<dbReference type="GO" id="GO:0005886">
    <property type="term" value="C:plasma membrane"/>
    <property type="evidence" value="ECO:0007669"/>
    <property type="project" value="UniProtKB-SubCell"/>
</dbReference>
<dbReference type="GO" id="GO:0020037">
    <property type="term" value="F:heme binding"/>
    <property type="evidence" value="ECO:0007669"/>
    <property type="project" value="InterPro"/>
</dbReference>
<dbReference type="GO" id="GO:0046872">
    <property type="term" value="F:metal ion binding"/>
    <property type="evidence" value="ECO:0007669"/>
    <property type="project" value="UniProtKB-KW"/>
</dbReference>
<dbReference type="GO" id="GO:0017004">
    <property type="term" value="P:cytochrome complex assembly"/>
    <property type="evidence" value="ECO:0007669"/>
    <property type="project" value="UniProtKB-KW"/>
</dbReference>
<dbReference type="FunFam" id="2.40.50.140:FF:000104">
    <property type="entry name" value="Cytochrome c-type biogenesis protein CcmE"/>
    <property type="match status" value="1"/>
</dbReference>
<dbReference type="Gene3D" id="2.40.50.140">
    <property type="entry name" value="Nucleic acid-binding proteins"/>
    <property type="match status" value="1"/>
</dbReference>
<dbReference type="HAMAP" id="MF_01959">
    <property type="entry name" value="CcmE"/>
    <property type="match status" value="1"/>
</dbReference>
<dbReference type="InterPro" id="IPR004329">
    <property type="entry name" value="CcmE"/>
</dbReference>
<dbReference type="InterPro" id="IPR036127">
    <property type="entry name" value="CcmE-like_sf"/>
</dbReference>
<dbReference type="InterPro" id="IPR012340">
    <property type="entry name" value="NA-bd_OB-fold"/>
</dbReference>
<dbReference type="NCBIfam" id="NF009635">
    <property type="entry name" value="PRK13150.1"/>
    <property type="match status" value="1"/>
</dbReference>
<dbReference type="NCBIfam" id="NF009638">
    <property type="entry name" value="PRK13165.1"/>
    <property type="match status" value="1"/>
</dbReference>
<dbReference type="NCBIfam" id="NF009727">
    <property type="entry name" value="PRK13254.1-1"/>
    <property type="match status" value="1"/>
</dbReference>
<dbReference type="NCBIfam" id="NF009729">
    <property type="entry name" value="PRK13254.1-3"/>
    <property type="match status" value="1"/>
</dbReference>
<dbReference type="PANTHER" id="PTHR34128">
    <property type="entry name" value="CYTOCHROME C-TYPE BIOGENESIS PROTEIN CCME HOMOLOG, MITOCHONDRIAL"/>
    <property type="match status" value="1"/>
</dbReference>
<dbReference type="PANTHER" id="PTHR34128:SF2">
    <property type="entry name" value="CYTOCHROME C-TYPE BIOGENESIS PROTEIN CCME HOMOLOG, MITOCHONDRIAL"/>
    <property type="match status" value="1"/>
</dbReference>
<dbReference type="Pfam" id="PF03100">
    <property type="entry name" value="CcmE"/>
    <property type="match status" value="1"/>
</dbReference>
<dbReference type="SUPFAM" id="SSF82093">
    <property type="entry name" value="Heme chaperone CcmE"/>
    <property type="match status" value="1"/>
</dbReference>